<protein>
    <recommendedName>
        <fullName>Uncharacterized protein RP252</fullName>
    </recommendedName>
</protein>
<feature type="chain" id="PRO_0000101342" description="Uncharacterized protein RP252">
    <location>
        <begin position="1"/>
        <end position="163"/>
    </location>
</feature>
<feature type="transmembrane region" description="Helical" evidence="1">
    <location>
        <begin position="7"/>
        <end position="27"/>
    </location>
</feature>
<feature type="transmembrane region" description="Helical" evidence="1">
    <location>
        <begin position="51"/>
        <end position="71"/>
    </location>
</feature>
<sequence>MFMINNYLNEIWLIIGIICILVECYIVQNMGFLFLGLGALSNSLFVYNKPLVIFTLTNQITFFGLFSLVWFCILYYPLKKYVYNKTDKTKSYSDMIGKTVEVYSPTVSSNTIGQVKWSGAIMNAYLAPNEIDAKIGEQLFIIGVKGNILICSKHRFNNNADYC</sequence>
<dbReference type="EMBL" id="AJ235271">
    <property type="protein sequence ID" value="CAA14714.1"/>
    <property type="molecule type" value="Genomic_DNA"/>
</dbReference>
<dbReference type="PIR" id="H71679">
    <property type="entry name" value="H71679"/>
</dbReference>
<dbReference type="RefSeq" id="NP_220637.1">
    <property type="nucleotide sequence ID" value="NC_000963.1"/>
</dbReference>
<dbReference type="RefSeq" id="WP_010886246.1">
    <property type="nucleotide sequence ID" value="NC_000963.1"/>
</dbReference>
<dbReference type="SMR" id="Q9ZDS3"/>
<dbReference type="STRING" id="272947.gene:17555333"/>
<dbReference type="EnsemblBacteria" id="CAA14714">
    <property type="protein sequence ID" value="CAA14714"/>
    <property type="gene ID" value="CAA14714"/>
</dbReference>
<dbReference type="KEGG" id="rpr:RP252"/>
<dbReference type="PATRIC" id="fig|272947.5.peg.259"/>
<dbReference type="eggNOG" id="COG1585">
    <property type="taxonomic scope" value="Bacteria"/>
</dbReference>
<dbReference type="HOGENOM" id="CLU_137957_0_0_5"/>
<dbReference type="OrthoDB" id="7161183at2"/>
<dbReference type="Proteomes" id="UP000002480">
    <property type="component" value="Chromosome"/>
</dbReference>
<dbReference type="GO" id="GO:0005886">
    <property type="term" value="C:plasma membrane"/>
    <property type="evidence" value="ECO:0007669"/>
    <property type="project" value="UniProtKB-SubCell"/>
</dbReference>
<dbReference type="Gene3D" id="2.40.50.140">
    <property type="entry name" value="Nucleic acid-binding proteins"/>
    <property type="match status" value="1"/>
</dbReference>
<dbReference type="InterPro" id="IPR012340">
    <property type="entry name" value="NA-bd_OB-fold"/>
</dbReference>
<gene>
    <name type="ordered locus">RP252</name>
</gene>
<accession>Q9ZDS3</accession>
<reference key="1">
    <citation type="journal article" date="1998" name="Nature">
        <title>The genome sequence of Rickettsia prowazekii and the origin of mitochondria.</title>
        <authorList>
            <person name="Andersson S.G.E."/>
            <person name="Zomorodipour A."/>
            <person name="Andersson J.O."/>
            <person name="Sicheritz-Ponten T."/>
            <person name="Alsmark U.C.M."/>
            <person name="Podowski R.M."/>
            <person name="Naeslund A.K."/>
            <person name="Eriksson A.-S."/>
            <person name="Winkler H.H."/>
            <person name="Kurland C.G."/>
        </authorList>
    </citation>
    <scope>NUCLEOTIDE SEQUENCE [LARGE SCALE GENOMIC DNA]</scope>
    <source>
        <strain>Madrid E</strain>
    </source>
</reference>
<proteinExistence type="predicted"/>
<evidence type="ECO:0000255" key="1"/>
<evidence type="ECO:0000305" key="2"/>
<comment type="subcellular location">
    <subcellularLocation>
        <location evidence="2">Cell membrane</location>
        <topology evidence="2">Multi-pass membrane protein</topology>
    </subcellularLocation>
</comment>
<name>Y252_RICPR</name>
<keyword id="KW-1003">Cell membrane</keyword>
<keyword id="KW-0472">Membrane</keyword>
<keyword id="KW-1185">Reference proteome</keyword>
<keyword id="KW-0812">Transmembrane</keyword>
<keyword id="KW-1133">Transmembrane helix</keyword>
<organism>
    <name type="scientific">Rickettsia prowazekii (strain Madrid E)</name>
    <dbReference type="NCBI Taxonomy" id="272947"/>
    <lineage>
        <taxon>Bacteria</taxon>
        <taxon>Pseudomonadati</taxon>
        <taxon>Pseudomonadota</taxon>
        <taxon>Alphaproteobacteria</taxon>
        <taxon>Rickettsiales</taxon>
        <taxon>Rickettsiaceae</taxon>
        <taxon>Rickettsieae</taxon>
        <taxon>Rickettsia</taxon>
        <taxon>typhus group</taxon>
    </lineage>
</organism>